<name>SYM_CAUVN</name>
<protein>
    <recommendedName>
        <fullName evidence="1">Methionine--tRNA ligase</fullName>
        <ecNumber evidence="1">6.1.1.10</ecNumber>
    </recommendedName>
    <alternativeName>
        <fullName evidence="1">Methionyl-tRNA synthetase</fullName>
        <shortName evidence="1">MetRS</shortName>
    </alternativeName>
</protein>
<sequence>MARILITSALPYINGIKHLGNLAGSMLPADVYARFKRAQGHETLYICATDEHGTPAELAAAAAGQDVATYCAEQHVLQHEVGRAFGLSWDHFGRSSSPQNHRLTQHFCQALEDHGLIEERVDQMVYSVDDKRFLPDRYVEGTCPHCKFEKARGDQCDNCGNLLDPTDLIDPYSVISGSRNIEVRDTKHLYLLQTKMQDKIRAWVDAHADWPPLARSIAYKHLDEGLIDRGITRDLAWGIPVAQDGVPRPGFEEKVFYVWFDAPIEYIAATQEWAEGSPDRDWKRWWRTDAGADDVRYVQFMGKDNVAFHTVSFPATILGSEEPWKSVDMLKAFNWLNWYGGKFSTSNKRGVFMDAALEILPPDLWRWYLTANSPEGSDTAFTWEQFASAVNRDLADVLGNFVNRILKFNESKFEGVVPAGGEPGPLEEKLFADVSARLADLAEQMDAIEIRKSAQALRALWVVGNEYLQEAAPWTAIKTDRDRAAVIVRTALNLAALYAKISAPFIPFAAEKIGDAFGLDFPASWPSNDAKAELNTLSVGRPITVPEVLFKKIEDEQIAEWTARFGGAE</sequence>
<reference key="1">
    <citation type="journal article" date="2010" name="J. Bacteriol.">
        <title>The genetic basis of laboratory adaptation in Caulobacter crescentus.</title>
        <authorList>
            <person name="Marks M.E."/>
            <person name="Castro-Rojas C.M."/>
            <person name="Teiling C."/>
            <person name="Du L."/>
            <person name="Kapatral V."/>
            <person name="Walunas T.L."/>
            <person name="Crosson S."/>
        </authorList>
    </citation>
    <scope>NUCLEOTIDE SEQUENCE [LARGE SCALE GENOMIC DNA]</scope>
    <source>
        <strain>NA1000 / CB15N</strain>
    </source>
</reference>
<dbReference type="EC" id="6.1.1.10" evidence="1"/>
<dbReference type="EMBL" id="CP001340">
    <property type="protein sequence ID" value="ACL95012.1"/>
    <property type="molecule type" value="Genomic_DNA"/>
</dbReference>
<dbReference type="RefSeq" id="WP_010919354.1">
    <property type="nucleotide sequence ID" value="NC_011916.1"/>
</dbReference>
<dbReference type="RefSeq" id="YP_002516920.1">
    <property type="nucleotide sequence ID" value="NC_011916.1"/>
</dbReference>
<dbReference type="SMR" id="B8H5U4"/>
<dbReference type="GeneID" id="7333222"/>
<dbReference type="KEGG" id="ccs:CCNA_01547"/>
<dbReference type="PATRIC" id="fig|565050.3.peg.1526"/>
<dbReference type="HOGENOM" id="CLU_009710_1_2_5"/>
<dbReference type="OrthoDB" id="9810191at2"/>
<dbReference type="PhylomeDB" id="B8H5U4"/>
<dbReference type="Proteomes" id="UP000001364">
    <property type="component" value="Chromosome"/>
</dbReference>
<dbReference type="GO" id="GO:0017101">
    <property type="term" value="C:aminoacyl-tRNA synthetase multienzyme complex"/>
    <property type="evidence" value="ECO:0007669"/>
    <property type="project" value="TreeGrafter"/>
</dbReference>
<dbReference type="GO" id="GO:0005829">
    <property type="term" value="C:cytosol"/>
    <property type="evidence" value="ECO:0007669"/>
    <property type="project" value="TreeGrafter"/>
</dbReference>
<dbReference type="GO" id="GO:0005524">
    <property type="term" value="F:ATP binding"/>
    <property type="evidence" value="ECO:0007669"/>
    <property type="project" value="UniProtKB-UniRule"/>
</dbReference>
<dbReference type="GO" id="GO:0046872">
    <property type="term" value="F:metal ion binding"/>
    <property type="evidence" value="ECO:0007669"/>
    <property type="project" value="UniProtKB-KW"/>
</dbReference>
<dbReference type="GO" id="GO:0004825">
    <property type="term" value="F:methionine-tRNA ligase activity"/>
    <property type="evidence" value="ECO:0007669"/>
    <property type="project" value="UniProtKB-UniRule"/>
</dbReference>
<dbReference type="GO" id="GO:0006431">
    <property type="term" value="P:methionyl-tRNA aminoacylation"/>
    <property type="evidence" value="ECO:0007669"/>
    <property type="project" value="UniProtKB-UniRule"/>
</dbReference>
<dbReference type="CDD" id="cd07957">
    <property type="entry name" value="Anticodon_Ia_Met"/>
    <property type="match status" value="1"/>
</dbReference>
<dbReference type="CDD" id="cd00814">
    <property type="entry name" value="MetRS_core"/>
    <property type="match status" value="1"/>
</dbReference>
<dbReference type="FunFam" id="2.20.28.20:FF:000001">
    <property type="entry name" value="Methionine--tRNA ligase"/>
    <property type="match status" value="1"/>
</dbReference>
<dbReference type="Gene3D" id="3.40.50.620">
    <property type="entry name" value="HUPs"/>
    <property type="match status" value="1"/>
</dbReference>
<dbReference type="Gene3D" id="1.10.730.10">
    <property type="entry name" value="Isoleucyl-tRNA Synthetase, Domain 1"/>
    <property type="match status" value="1"/>
</dbReference>
<dbReference type="Gene3D" id="2.20.28.20">
    <property type="entry name" value="Methionyl-tRNA synthetase, Zn-domain"/>
    <property type="match status" value="1"/>
</dbReference>
<dbReference type="HAMAP" id="MF_00098">
    <property type="entry name" value="Met_tRNA_synth_type1"/>
    <property type="match status" value="1"/>
</dbReference>
<dbReference type="InterPro" id="IPR041872">
    <property type="entry name" value="Anticodon_Met"/>
</dbReference>
<dbReference type="InterPro" id="IPR023458">
    <property type="entry name" value="Met-tRNA_ligase_1"/>
</dbReference>
<dbReference type="InterPro" id="IPR014758">
    <property type="entry name" value="Met-tRNA_synth"/>
</dbReference>
<dbReference type="InterPro" id="IPR015413">
    <property type="entry name" value="Methionyl/Leucyl_tRNA_Synth"/>
</dbReference>
<dbReference type="InterPro" id="IPR033911">
    <property type="entry name" value="MetRS_core"/>
</dbReference>
<dbReference type="InterPro" id="IPR029038">
    <property type="entry name" value="MetRS_Zn"/>
</dbReference>
<dbReference type="InterPro" id="IPR014729">
    <property type="entry name" value="Rossmann-like_a/b/a_fold"/>
</dbReference>
<dbReference type="InterPro" id="IPR009080">
    <property type="entry name" value="tRNAsynth_Ia_anticodon-bd"/>
</dbReference>
<dbReference type="NCBIfam" id="TIGR00398">
    <property type="entry name" value="metG"/>
    <property type="match status" value="1"/>
</dbReference>
<dbReference type="PANTHER" id="PTHR45765">
    <property type="entry name" value="METHIONINE--TRNA LIGASE"/>
    <property type="match status" value="1"/>
</dbReference>
<dbReference type="PANTHER" id="PTHR45765:SF1">
    <property type="entry name" value="METHIONINE--TRNA LIGASE, CYTOPLASMIC"/>
    <property type="match status" value="1"/>
</dbReference>
<dbReference type="Pfam" id="PF19303">
    <property type="entry name" value="Anticodon_3"/>
    <property type="match status" value="1"/>
</dbReference>
<dbReference type="Pfam" id="PF09334">
    <property type="entry name" value="tRNA-synt_1g"/>
    <property type="match status" value="1"/>
</dbReference>
<dbReference type="PRINTS" id="PR01041">
    <property type="entry name" value="TRNASYNTHMET"/>
</dbReference>
<dbReference type="SUPFAM" id="SSF47323">
    <property type="entry name" value="Anticodon-binding domain of a subclass of class I aminoacyl-tRNA synthetases"/>
    <property type="match status" value="1"/>
</dbReference>
<dbReference type="SUPFAM" id="SSF57770">
    <property type="entry name" value="Methionyl-tRNA synthetase (MetRS), Zn-domain"/>
    <property type="match status" value="1"/>
</dbReference>
<dbReference type="SUPFAM" id="SSF52374">
    <property type="entry name" value="Nucleotidylyl transferase"/>
    <property type="match status" value="1"/>
</dbReference>
<keyword id="KW-0030">Aminoacyl-tRNA synthetase</keyword>
<keyword id="KW-0067">ATP-binding</keyword>
<keyword id="KW-0963">Cytoplasm</keyword>
<keyword id="KW-0436">Ligase</keyword>
<keyword id="KW-0479">Metal-binding</keyword>
<keyword id="KW-0547">Nucleotide-binding</keyword>
<keyword id="KW-0648">Protein biosynthesis</keyword>
<keyword id="KW-1185">Reference proteome</keyword>
<keyword id="KW-0862">Zinc</keyword>
<evidence type="ECO:0000255" key="1">
    <source>
        <dbReference type="HAMAP-Rule" id="MF_00098"/>
    </source>
</evidence>
<comment type="function">
    <text evidence="1">Is required not only for elongation of protein synthesis but also for the initiation of all mRNA translation through initiator tRNA(fMet) aminoacylation.</text>
</comment>
<comment type="catalytic activity">
    <reaction evidence="1">
        <text>tRNA(Met) + L-methionine + ATP = L-methionyl-tRNA(Met) + AMP + diphosphate</text>
        <dbReference type="Rhea" id="RHEA:13481"/>
        <dbReference type="Rhea" id="RHEA-COMP:9667"/>
        <dbReference type="Rhea" id="RHEA-COMP:9698"/>
        <dbReference type="ChEBI" id="CHEBI:30616"/>
        <dbReference type="ChEBI" id="CHEBI:33019"/>
        <dbReference type="ChEBI" id="CHEBI:57844"/>
        <dbReference type="ChEBI" id="CHEBI:78442"/>
        <dbReference type="ChEBI" id="CHEBI:78530"/>
        <dbReference type="ChEBI" id="CHEBI:456215"/>
        <dbReference type="EC" id="6.1.1.10"/>
    </reaction>
</comment>
<comment type="cofactor">
    <cofactor evidence="1">
        <name>Zn(2+)</name>
        <dbReference type="ChEBI" id="CHEBI:29105"/>
    </cofactor>
    <text evidence="1">Binds 1 zinc ion per subunit.</text>
</comment>
<comment type="subunit">
    <text evidence="1">Monomer.</text>
</comment>
<comment type="subcellular location">
    <subcellularLocation>
        <location evidence="1">Cytoplasm</location>
    </subcellularLocation>
</comment>
<comment type="similarity">
    <text evidence="1">Belongs to the class-I aminoacyl-tRNA synthetase family. MetG type 1 subfamily.</text>
</comment>
<proteinExistence type="inferred from homology"/>
<organism>
    <name type="scientific">Caulobacter vibrioides (strain NA1000 / CB15N)</name>
    <name type="common">Caulobacter crescentus</name>
    <dbReference type="NCBI Taxonomy" id="565050"/>
    <lineage>
        <taxon>Bacteria</taxon>
        <taxon>Pseudomonadati</taxon>
        <taxon>Pseudomonadota</taxon>
        <taxon>Alphaproteobacteria</taxon>
        <taxon>Caulobacterales</taxon>
        <taxon>Caulobacteraceae</taxon>
        <taxon>Caulobacter</taxon>
    </lineage>
</organism>
<gene>
    <name evidence="1" type="primary">metG</name>
    <name type="ordered locus">CCNA_01547</name>
</gene>
<accession>B8H5U4</accession>
<feature type="chain" id="PRO_1000199284" description="Methionine--tRNA ligase">
    <location>
        <begin position="1"/>
        <end position="569"/>
    </location>
</feature>
<feature type="short sequence motif" description="'HIGH' region">
    <location>
        <begin position="11"/>
        <end position="21"/>
    </location>
</feature>
<feature type="short sequence motif" description="'KMSKS' region">
    <location>
        <begin position="342"/>
        <end position="346"/>
    </location>
</feature>
<feature type="binding site" evidence="1">
    <location>
        <position position="143"/>
    </location>
    <ligand>
        <name>Zn(2+)</name>
        <dbReference type="ChEBI" id="CHEBI:29105"/>
    </ligand>
</feature>
<feature type="binding site" evidence="1">
    <location>
        <position position="146"/>
    </location>
    <ligand>
        <name>Zn(2+)</name>
        <dbReference type="ChEBI" id="CHEBI:29105"/>
    </ligand>
</feature>
<feature type="binding site" evidence="1">
    <location>
        <position position="156"/>
    </location>
    <ligand>
        <name>Zn(2+)</name>
        <dbReference type="ChEBI" id="CHEBI:29105"/>
    </ligand>
</feature>
<feature type="binding site" evidence="1">
    <location>
        <position position="159"/>
    </location>
    <ligand>
        <name>Zn(2+)</name>
        <dbReference type="ChEBI" id="CHEBI:29105"/>
    </ligand>
</feature>
<feature type="binding site" evidence="1">
    <location>
        <position position="345"/>
    </location>
    <ligand>
        <name>ATP</name>
        <dbReference type="ChEBI" id="CHEBI:30616"/>
    </ligand>
</feature>